<protein>
    <recommendedName>
        <fullName>Leucine-responsive regulatory protein</fullName>
    </recommendedName>
</protein>
<comment type="function">
    <text evidence="1">Mediates a global response to leucine. Exogenous leucine affects the expression of a number of different operons; lrp mediates this effect for at least some of these operons. For example it is regulator of the branched-chain amino acid transport genes (By similarity).</text>
</comment>
<comment type="subunit">
    <text evidence="1">Homodimer.</text>
</comment>
<sequence>MVDSKKRPGKDLDRIDRNILNELQKDGRISNVELSKRVGLSPTPCLERVRRLERQGFIQGYTALLNPHYLDASLLVFVEITLNRGAPDVFEQFNTAVQKLEEIQECHLVSGDFDYLLKTRVPDMSAYRKLLGETLLRLPGVNDTRTYVVMEEVKQSNRLVIKTR</sequence>
<name>LRP_ECO57</name>
<proteinExistence type="inferred from homology"/>
<accession>P0ACJ2</accession>
<accession>P19494</accession>
<organism>
    <name type="scientific">Escherichia coli O157:H7</name>
    <dbReference type="NCBI Taxonomy" id="83334"/>
    <lineage>
        <taxon>Bacteria</taxon>
        <taxon>Pseudomonadati</taxon>
        <taxon>Pseudomonadota</taxon>
        <taxon>Gammaproteobacteria</taxon>
        <taxon>Enterobacterales</taxon>
        <taxon>Enterobacteriaceae</taxon>
        <taxon>Escherichia</taxon>
    </lineage>
</organism>
<reference key="1">
    <citation type="journal article" date="2001" name="Nature">
        <title>Genome sequence of enterohaemorrhagic Escherichia coli O157:H7.</title>
        <authorList>
            <person name="Perna N.T."/>
            <person name="Plunkett G. III"/>
            <person name="Burland V."/>
            <person name="Mau B."/>
            <person name="Glasner J.D."/>
            <person name="Rose D.J."/>
            <person name="Mayhew G.F."/>
            <person name="Evans P.S."/>
            <person name="Gregor J."/>
            <person name="Kirkpatrick H.A."/>
            <person name="Posfai G."/>
            <person name="Hackett J."/>
            <person name="Klink S."/>
            <person name="Boutin A."/>
            <person name="Shao Y."/>
            <person name="Miller L."/>
            <person name="Grotbeck E.J."/>
            <person name="Davis N.W."/>
            <person name="Lim A."/>
            <person name="Dimalanta E.T."/>
            <person name="Potamousis K."/>
            <person name="Apodaca J."/>
            <person name="Anantharaman T.S."/>
            <person name="Lin J."/>
            <person name="Yen G."/>
            <person name="Schwartz D.C."/>
            <person name="Welch R.A."/>
            <person name="Blattner F.R."/>
        </authorList>
    </citation>
    <scope>NUCLEOTIDE SEQUENCE [LARGE SCALE GENOMIC DNA]</scope>
    <source>
        <strain>O157:H7 / EDL933 / ATCC 700927 / EHEC</strain>
    </source>
</reference>
<reference key="2">
    <citation type="journal article" date="2001" name="DNA Res.">
        <title>Complete genome sequence of enterohemorrhagic Escherichia coli O157:H7 and genomic comparison with a laboratory strain K-12.</title>
        <authorList>
            <person name="Hayashi T."/>
            <person name="Makino K."/>
            <person name="Ohnishi M."/>
            <person name="Kurokawa K."/>
            <person name="Ishii K."/>
            <person name="Yokoyama K."/>
            <person name="Han C.-G."/>
            <person name="Ohtsubo E."/>
            <person name="Nakayama K."/>
            <person name="Murata T."/>
            <person name="Tanaka M."/>
            <person name="Tobe T."/>
            <person name="Iida T."/>
            <person name="Takami H."/>
            <person name="Honda T."/>
            <person name="Sasakawa C."/>
            <person name="Ogasawara N."/>
            <person name="Yasunaga T."/>
            <person name="Kuhara S."/>
            <person name="Shiba T."/>
            <person name="Hattori M."/>
            <person name="Shinagawa H."/>
        </authorList>
    </citation>
    <scope>NUCLEOTIDE SEQUENCE [LARGE SCALE GENOMIC DNA]</scope>
    <source>
        <strain>O157:H7 / Sakai / RIMD 0509952 / EHEC</strain>
    </source>
</reference>
<feature type="initiator methionine" description="Removed" evidence="1">
    <location>
        <position position="1"/>
    </location>
</feature>
<feature type="chain" id="PRO_0000111729" description="Leucine-responsive regulatory protein">
    <location>
        <begin position="2"/>
        <end position="164"/>
    </location>
</feature>
<feature type="domain" description="HTH asnC-type" evidence="2">
    <location>
        <begin position="12"/>
        <end position="73"/>
    </location>
</feature>
<feature type="DNA-binding region" description="H-T-H motif" evidence="2">
    <location>
        <begin position="31"/>
        <end position="50"/>
    </location>
</feature>
<dbReference type="EMBL" id="AE005174">
    <property type="protein sequence ID" value="AAG55376.1"/>
    <property type="molecule type" value="Genomic_DNA"/>
</dbReference>
<dbReference type="EMBL" id="BA000007">
    <property type="protein sequence ID" value="BAB34397.1"/>
    <property type="molecule type" value="Genomic_DNA"/>
</dbReference>
<dbReference type="PIR" id="D85614">
    <property type="entry name" value="D85614"/>
</dbReference>
<dbReference type="PIR" id="F90750">
    <property type="entry name" value="F90750"/>
</dbReference>
<dbReference type="RefSeq" id="NP_309001.1">
    <property type="nucleotide sequence ID" value="NC_002695.1"/>
</dbReference>
<dbReference type="RefSeq" id="WP_000228473.1">
    <property type="nucleotide sequence ID" value="NZ_VOAI01000006.1"/>
</dbReference>
<dbReference type="BMRB" id="P0ACJ2"/>
<dbReference type="SMR" id="P0ACJ2"/>
<dbReference type="STRING" id="155864.Z1234"/>
<dbReference type="GeneID" id="917724"/>
<dbReference type="GeneID" id="97601058"/>
<dbReference type="KEGG" id="ece:Z1234"/>
<dbReference type="KEGG" id="ecs:ECs_0974"/>
<dbReference type="PATRIC" id="fig|386585.9.peg.1091"/>
<dbReference type="eggNOG" id="COG1522">
    <property type="taxonomic scope" value="Bacteria"/>
</dbReference>
<dbReference type="HOGENOM" id="CLU_091233_0_0_6"/>
<dbReference type="OMA" id="GPSKLHM"/>
<dbReference type="Proteomes" id="UP000000558">
    <property type="component" value="Chromosome"/>
</dbReference>
<dbReference type="Proteomes" id="UP000002519">
    <property type="component" value="Chromosome"/>
</dbReference>
<dbReference type="GO" id="GO:0005829">
    <property type="term" value="C:cytosol"/>
    <property type="evidence" value="ECO:0007669"/>
    <property type="project" value="TreeGrafter"/>
</dbReference>
<dbReference type="GO" id="GO:0043565">
    <property type="term" value="F:sequence-specific DNA binding"/>
    <property type="evidence" value="ECO:0007669"/>
    <property type="project" value="InterPro"/>
</dbReference>
<dbReference type="GO" id="GO:0006524">
    <property type="term" value="P:alanine catabolic process"/>
    <property type="evidence" value="ECO:0007669"/>
    <property type="project" value="TreeGrafter"/>
</dbReference>
<dbReference type="GO" id="GO:0006355">
    <property type="term" value="P:regulation of DNA-templated transcription"/>
    <property type="evidence" value="ECO:0007669"/>
    <property type="project" value="UniProtKB-ARBA"/>
</dbReference>
<dbReference type="GO" id="GO:0043201">
    <property type="term" value="P:response to L-leucine"/>
    <property type="evidence" value="ECO:0007669"/>
    <property type="project" value="TreeGrafter"/>
</dbReference>
<dbReference type="CDD" id="cd00090">
    <property type="entry name" value="HTH_ARSR"/>
    <property type="match status" value="1"/>
</dbReference>
<dbReference type="FunFam" id="1.10.10.10:FF:000015">
    <property type="entry name" value="Leucine-responsive transcriptional regulator Lrp"/>
    <property type="match status" value="1"/>
</dbReference>
<dbReference type="FunFam" id="3.30.70.920:FF:000001">
    <property type="entry name" value="Transcriptional regulator, AsnC family"/>
    <property type="match status" value="1"/>
</dbReference>
<dbReference type="Gene3D" id="3.30.70.920">
    <property type="match status" value="1"/>
</dbReference>
<dbReference type="Gene3D" id="1.10.10.10">
    <property type="entry name" value="Winged helix-like DNA-binding domain superfamily/Winged helix DNA-binding domain"/>
    <property type="match status" value="1"/>
</dbReference>
<dbReference type="InterPro" id="IPR011991">
    <property type="entry name" value="ArsR-like_HTH"/>
</dbReference>
<dbReference type="InterPro" id="IPR000485">
    <property type="entry name" value="AsnC-type_HTH_dom"/>
</dbReference>
<dbReference type="InterPro" id="IPR011008">
    <property type="entry name" value="Dimeric_a/b-barrel"/>
</dbReference>
<dbReference type="InterPro" id="IPR019888">
    <property type="entry name" value="Tscrpt_reg_AsnC-like"/>
</dbReference>
<dbReference type="InterPro" id="IPR019887">
    <property type="entry name" value="Tscrpt_reg_AsnC/Lrp_C"/>
</dbReference>
<dbReference type="InterPro" id="IPR019885">
    <property type="entry name" value="Tscrpt_reg_HTH_AsnC-type_CS"/>
</dbReference>
<dbReference type="InterPro" id="IPR036388">
    <property type="entry name" value="WH-like_DNA-bd_sf"/>
</dbReference>
<dbReference type="InterPro" id="IPR036390">
    <property type="entry name" value="WH_DNA-bd_sf"/>
</dbReference>
<dbReference type="NCBIfam" id="NF008370">
    <property type="entry name" value="PRK11169.1"/>
    <property type="match status" value="1"/>
</dbReference>
<dbReference type="PANTHER" id="PTHR30154">
    <property type="entry name" value="LEUCINE-RESPONSIVE REGULATORY PROTEIN"/>
    <property type="match status" value="1"/>
</dbReference>
<dbReference type="PANTHER" id="PTHR30154:SF0">
    <property type="entry name" value="LEUCINE-RESPONSIVE REGULATORY PROTEIN"/>
    <property type="match status" value="1"/>
</dbReference>
<dbReference type="Pfam" id="PF01037">
    <property type="entry name" value="AsnC_trans_reg"/>
    <property type="match status" value="1"/>
</dbReference>
<dbReference type="Pfam" id="PF13412">
    <property type="entry name" value="HTH_24"/>
    <property type="match status" value="1"/>
</dbReference>
<dbReference type="PRINTS" id="PR00033">
    <property type="entry name" value="HTHASNC"/>
</dbReference>
<dbReference type="SMART" id="SM00344">
    <property type="entry name" value="HTH_ASNC"/>
    <property type="match status" value="1"/>
</dbReference>
<dbReference type="SUPFAM" id="SSF54909">
    <property type="entry name" value="Dimeric alpha+beta barrel"/>
    <property type="match status" value="1"/>
</dbReference>
<dbReference type="SUPFAM" id="SSF46785">
    <property type="entry name" value="Winged helix' DNA-binding domain"/>
    <property type="match status" value="1"/>
</dbReference>
<dbReference type="PROSITE" id="PS00519">
    <property type="entry name" value="HTH_ASNC_1"/>
    <property type="match status" value="1"/>
</dbReference>
<dbReference type="PROSITE" id="PS50956">
    <property type="entry name" value="HTH_ASNC_2"/>
    <property type="match status" value="1"/>
</dbReference>
<evidence type="ECO:0000250" key="1"/>
<evidence type="ECO:0000255" key="2">
    <source>
        <dbReference type="PROSITE-ProRule" id="PRU00319"/>
    </source>
</evidence>
<keyword id="KW-0010">Activator</keyword>
<keyword id="KW-0238">DNA-binding</keyword>
<keyword id="KW-1185">Reference proteome</keyword>
<keyword id="KW-0804">Transcription</keyword>
<keyword id="KW-0805">Transcription regulation</keyword>
<gene>
    <name type="primary">lrp</name>
    <name type="ordered locus">Z1234</name>
    <name type="ordered locus">ECs0974</name>
</gene>